<gene>
    <name type="primary">CNR1</name>
</gene>
<feature type="chain" id="PRO_0000069317" description="Cannabinoid receptor 1">
    <location>
        <begin position="1"/>
        <end position="472"/>
    </location>
</feature>
<feature type="topological domain" description="Extracellular" evidence="3">
    <location>
        <begin position="1"/>
        <end position="116"/>
    </location>
</feature>
<feature type="transmembrane region" description="Helical; Name=1" evidence="3">
    <location>
        <begin position="117"/>
        <end position="142"/>
    </location>
</feature>
<feature type="topological domain" description="Cytoplasmic" evidence="3">
    <location>
        <begin position="143"/>
        <end position="154"/>
    </location>
</feature>
<feature type="transmembrane region" description="Helical; Name=2" evidence="3">
    <location>
        <begin position="155"/>
        <end position="175"/>
    </location>
</feature>
<feature type="topological domain" description="Extracellular" evidence="3">
    <location>
        <begin position="176"/>
        <end position="187"/>
    </location>
</feature>
<feature type="transmembrane region" description="Helical; Name=3" evidence="3">
    <location>
        <begin position="188"/>
        <end position="212"/>
    </location>
</feature>
<feature type="topological domain" description="Cytoplasmic" evidence="3">
    <location>
        <begin position="213"/>
        <end position="232"/>
    </location>
</feature>
<feature type="transmembrane region" description="Helical; Name=4" evidence="3">
    <location>
        <begin position="233"/>
        <end position="255"/>
    </location>
</feature>
<feature type="topological domain" description="Extracellular" evidence="3">
    <location>
        <begin position="256"/>
        <end position="273"/>
    </location>
</feature>
<feature type="transmembrane region" description="Helical; Name=5" evidence="3">
    <location>
        <begin position="274"/>
        <end position="299"/>
    </location>
</feature>
<feature type="topological domain" description="Cytoplasmic" evidence="3">
    <location>
        <begin position="300"/>
        <end position="344"/>
    </location>
</feature>
<feature type="transmembrane region" description="Helical; Name=6" evidence="3">
    <location>
        <begin position="345"/>
        <end position="365"/>
    </location>
</feature>
<feature type="topological domain" description="Extracellular" evidence="3">
    <location>
        <begin position="366"/>
        <end position="377"/>
    </location>
</feature>
<feature type="transmembrane region" description="Helical; Name=7" evidence="3">
    <location>
        <begin position="378"/>
        <end position="399"/>
    </location>
</feature>
<feature type="topological domain" description="Cytoplasmic" evidence="3">
    <location>
        <begin position="400"/>
        <end position="472"/>
    </location>
</feature>
<feature type="region of interest" description="Required for mitochondrial localization" evidence="4">
    <location>
        <begin position="2"/>
        <end position="23"/>
    </location>
</feature>
<feature type="modified residue" description="Phosphoserine" evidence="4">
    <location>
        <position position="425"/>
    </location>
</feature>
<feature type="modified residue" description="Phosphoserine" evidence="4">
    <location>
        <position position="429"/>
    </location>
</feature>
<feature type="lipid moiety-binding region" description="S-palmitoyl cysteine" evidence="3">
    <location>
        <position position="415"/>
    </location>
</feature>
<feature type="glycosylation site" description="N-linked (GlcNAc...) asparagine" evidence="5">
    <location>
        <position position="77"/>
    </location>
</feature>
<feature type="glycosylation site" description="N-linked (GlcNAc...) asparagine" evidence="5">
    <location>
        <position position="83"/>
    </location>
</feature>
<dbReference type="EMBL" id="AY665255">
    <property type="protein sequence ID" value="AAV74293.1"/>
    <property type="molecule type" value="mRNA"/>
</dbReference>
<dbReference type="RefSeq" id="NP_001013035.1">
    <property type="nucleotide sequence ID" value="NM_001013017.1"/>
</dbReference>
<dbReference type="RefSeq" id="XP_009449804.1">
    <property type="nucleotide sequence ID" value="XM_009451529.5"/>
</dbReference>
<dbReference type="RefSeq" id="XP_009449805.1">
    <property type="nucleotide sequence ID" value="XM_009451530.5"/>
</dbReference>
<dbReference type="RefSeq" id="XP_009449806.1">
    <property type="nucleotide sequence ID" value="XM_009451531.5"/>
</dbReference>
<dbReference type="RefSeq" id="XP_063668078.1">
    <property type="nucleotide sequence ID" value="XM_063812008.1"/>
</dbReference>
<dbReference type="SMR" id="Q5IS73"/>
<dbReference type="FunCoup" id="Q5IS73">
    <property type="interactions" value="1264"/>
</dbReference>
<dbReference type="GlyCosmos" id="Q5IS73">
    <property type="glycosylation" value="2 sites, No reported glycans"/>
</dbReference>
<dbReference type="PaxDb" id="9598-ENSPTRP00000055363"/>
<dbReference type="GeneID" id="472066"/>
<dbReference type="CTD" id="1268"/>
<dbReference type="eggNOG" id="KOG3656">
    <property type="taxonomic scope" value="Eukaryota"/>
</dbReference>
<dbReference type="HOGENOM" id="CLU_009579_7_0_1"/>
<dbReference type="InParanoid" id="Q5IS73"/>
<dbReference type="OrthoDB" id="3532at9604"/>
<dbReference type="TreeFam" id="TF330052"/>
<dbReference type="Proteomes" id="UP000002277">
    <property type="component" value="Unplaced"/>
</dbReference>
<dbReference type="GO" id="GO:0030424">
    <property type="term" value="C:axon"/>
    <property type="evidence" value="ECO:0007669"/>
    <property type="project" value="UniProtKB-SubCell"/>
</dbReference>
<dbReference type="GO" id="GO:0005737">
    <property type="term" value="C:cytoplasm"/>
    <property type="evidence" value="ECO:0000318"/>
    <property type="project" value="GO_Central"/>
</dbReference>
<dbReference type="GO" id="GO:0005741">
    <property type="term" value="C:mitochondrial outer membrane"/>
    <property type="evidence" value="ECO:0007669"/>
    <property type="project" value="UniProtKB-SubCell"/>
</dbReference>
<dbReference type="GO" id="GO:0005886">
    <property type="term" value="C:plasma membrane"/>
    <property type="evidence" value="ECO:0000318"/>
    <property type="project" value="GO_Central"/>
</dbReference>
<dbReference type="GO" id="GO:0098793">
    <property type="term" value="C:presynapse"/>
    <property type="evidence" value="ECO:0007669"/>
    <property type="project" value="UniProtKB-SubCell"/>
</dbReference>
<dbReference type="GO" id="GO:0004949">
    <property type="term" value="F:cannabinoid receptor activity"/>
    <property type="evidence" value="ECO:0000250"/>
    <property type="project" value="UniProtKB"/>
</dbReference>
<dbReference type="GO" id="GO:0004930">
    <property type="term" value="F:G protein-coupled receptor activity"/>
    <property type="evidence" value="ECO:0000318"/>
    <property type="project" value="GO_Central"/>
</dbReference>
<dbReference type="GO" id="GO:0007189">
    <property type="term" value="P:adenylate cyclase-activating G protein-coupled receptor signaling pathway"/>
    <property type="evidence" value="ECO:0000318"/>
    <property type="project" value="GO_Central"/>
</dbReference>
<dbReference type="GO" id="GO:0007188">
    <property type="term" value="P:adenylate cyclase-modulating G protein-coupled receptor signaling pathway"/>
    <property type="evidence" value="ECO:0000250"/>
    <property type="project" value="UniProtKB"/>
</dbReference>
<dbReference type="GO" id="GO:0019222">
    <property type="term" value="P:regulation of metabolic process"/>
    <property type="evidence" value="ECO:0000318"/>
    <property type="project" value="GO_Central"/>
</dbReference>
<dbReference type="CDD" id="cd15340">
    <property type="entry name" value="7tmA_CB1"/>
    <property type="match status" value="1"/>
</dbReference>
<dbReference type="FunFam" id="1.20.1070.10:FF:000072">
    <property type="entry name" value="Cannabinoid receptor 1"/>
    <property type="match status" value="1"/>
</dbReference>
<dbReference type="Gene3D" id="1.20.1070.10">
    <property type="entry name" value="Rhodopsin 7-helix transmembrane proteins"/>
    <property type="match status" value="1"/>
</dbReference>
<dbReference type="InterPro" id="IPR000810">
    <property type="entry name" value="Canbinoid_rcpt_1"/>
</dbReference>
<dbReference type="InterPro" id="IPR002230">
    <property type="entry name" value="Cnbnoid_rcpt"/>
</dbReference>
<dbReference type="InterPro" id="IPR000276">
    <property type="entry name" value="GPCR_Rhodpsn"/>
</dbReference>
<dbReference type="InterPro" id="IPR017452">
    <property type="entry name" value="GPCR_Rhodpsn_7TM"/>
</dbReference>
<dbReference type="PANTHER" id="PTHR22750">
    <property type="entry name" value="G-PROTEIN COUPLED RECEPTOR"/>
    <property type="match status" value="1"/>
</dbReference>
<dbReference type="Pfam" id="PF00001">
    <property type="entry name" value="7tm_1"/>
    <property type="match status" value="1"/>
</dbReference>
<dbReference type="PIRSF" id="PIRSF037995">
    <property type="entry name" value="Cnoid_rcpt_1"/>
    <property type="match status" value="1"/>
</dbReference>
<dbReference type="PRINTS" id="PR00522">
    <property type="entry name" value="CANABINOID1R"/>
</dbReference>
<dbReference type="PRINTS" id="PR00362">
    <property type="entry name" value="CANNABINOIDR"/>
</dbReference>
<dbReference type="PRINTS" id="PR00237">
    <property type="entry name" value="GPCRRHODOPSN"/>
</dbReference>
<dbReference type="SMART" id="SM01381">
    <property type="entry name" value="7TM_GPCR_Srsx"/>
    <property type="match status" value="1"/>
</dbReference>
<dbReference type="SUPFAM" id="SSF81321">
    <property type="entry name" value="Family A G protein-coupled receptor-like"/>
    <property type="match status" value="1"/>
</dbReference>
<dbReference type="PROSITE" id="PS00237">
    <property type="entry name" value="G_PROTEIN_RECEP_F1_1"/>
    <property type="match status" value="1"/>
</dbReference>
<dbReference type="PROSITE" id="PS50262">
    <property type="entry name" value="G_PROTEIN_RECEP_F1_2"/>
    <property type="match status" value="1"/>
</dbReference>
<accession>Q5IS73</accession>
<sequence>MKSILDGLADTTFRTITTDLLYVGSNDIQYEDIKGDMASKLGYFPQKFPLTSFRGSPFQEKMTAGDNPQLVPADQVNITEFYNKSLSSFKENEENIQCGENFMDIECFMVLNPSQQLAIAVLSLTLGTFTVLENLLVLCVILHSRSLRCRPSYHFIGSLAVADLLGSVIFVYSFIDFHVFHRKDSRNVFLFKLGGVTASFTASVGSLFLTAIDRYISIHRPLAYKRIVTRPKAVVAFCLMWTIAIVIAVLPLLGWNCEKLQSVCSDIFPHIDETYLMFWIGVTSVLLLFIVYAYMYILWKAHSHAVRMIQRGTQKSIIIHTSEDGKVQVTRPDQARMDIRLAKTLVLILVVLIICWGPLLAIMVYDVFGKMNKLIKTVFAFCSMLCLLNSTVNPIIYALRSKDLRHAFRSMFPSCEGTAQPLDNSMGDSDCLHKHANNAASVHRAAESCIKSTVKIAKVTMSVSTDTSAEAL</sequence>
<evidence type="ECO:0000250" key="1">
    <source>
        <dbReference type="UniProtKB" id="O02777"/>
    </source>
</evidence>
<evidence type="ECO:0000250" key="2">
    <source>
        <dbReference type="UniProtKB" id="P20272"/>
    </source>
</evidence>
<evidence type="ECO:0000250" key="3">
    <source>
        <dbReference type="UniProtKB" id="P21554"/>
    </source>
</evidence>
<evidence type="ECO:0000250" key="4">
    <source>
        <dbReference type="UniProtKB" id="P47746"/>
    </source>
</evidence>
<evidence type="ECO:0000255" key="5"/>
<evidence type="ECO:0000255" key="6">
    <source>
        <dbReference type="PROSITE-ProRule" id="PRU00521"/>
    </source>
</evidence>
<keyword id="KW-1003">Cell membrane</keyword>
<keyword id="KW-0966">Cell projection</keyword>
<keyword id="KW-0297">G-protein coupled receptor</keyword>
<keyword id="KW-0325">Glycoprotein</keyword>
<keyword id="KW-0449">Lipoprotein</keyword>
<keyword id="KW-0472">Membrane</keyword>
<keyword id="KW-0496">Mitochondrion</keyword>
<keyword id="KW-1000">Mitochondrion outer membrane</keyword>
<keyword id="KW-0564">Palmitate</keyword>
<keyword id="KW-0597">Phosphoprotein</keyword>
<keyword id="KW-0675">Receptor</keyword>
<keyword id="KW-1185">Reference proteome</keyword>
<keyword id="KW-0770">Synapse</keyword>
<keyword id="KW-0807">Transducer</keyword>
<keyword id="KW-0812">Transmembrane</keyword>
<keyword id="KW-1133">Transmembrane helix</keyword>
<organism>
    <name type="scientific">Pan troglodytes</name>
    <name type="common">Chimpanzee</name>
    <dbReference type="NCBI Taxonomy" id="9598"/>
    <lineage>
        <taxon>Eukaryota</taxon>
        <taxon>Metazoa</taxon>
        <taxon>Chordata</taxon>
        <taxon>Craniata</taxon>
        <taxon>Vertebrata</taxon>
        <taxon>Euteleostomi</taxon>
        <taxon>Mammalia</taxon>
        <taxon>Eutheria</taxon>
        <taxon>Euarchontoglires</taxon>
        <taxon>Primates</taxon>
        <taxon>Haplorrhini</taxon>
        <taxon>Catarrhini</taxon>
        <taxon>Hominidae</taxon>
        <taxon>Pan</taxon>
    </lineage>
</organism>
<protein>
    <recommendedName>
        <fullName>Cannabinoid receptor 1</fullName>
        <shortName>CB-R</shortName>
        <shortName>CB1</shortName>
    </recommendedName>
</protein>
<proteinExistence type="evidence at transcript level"/>
<reference key="1">
    <citation type="journal article" date="2004" name="Cell">
        <title>Accelerated evolution of nervous system genes in the origin of Homo sapiens.</title>
        <authorList>
            <person name="Dorus S."/>
            <person name="Vallender E.J."/>
            <person name="Evans P.D."/>
            <person name="Anderson J.R."/>
            <person name="Gilbert S.L."/>
            <person name="Mahowald M."/>
            <person name="Wyckoff G.J."/>
            <person name="Malcom C.M."/>
            <person name="Lahn B.T."/>
        </authorList>
    </citation>
    <scope>NUCLEOTIDE SEQUENCE [MRNA]</scope>
</reference>
<comment type="function">
    <text evidence="1 3 4">G-protein coupled receptor for cannabinoids, including endocannabinoids (eCBs), such as N-arachidonoylethanolamide (also called anandamide or AEA) and 2-arachidonoylglycerol (2-AG). Mediates many cannabinoid-induced effects, acting, among others, on food intake, memory loss, gastrointestinal motility, catalepsy, ambulatory activity, anxiety, chronic pain. Signaling typically involves reduction in cyclic AMP (By similarity). In the hypothalamus, may have a dual effect on mitochondrial respiration depending upon the agonist dose and possibly upon the cell type. Increases respiration at low doses, while decreases respiration at high doses. At high doses, CNR1 signal transduction involves G-protein alpha-i protein activation and subsequent inhibition of mitochondrial soluble adenylate cyclase, decrease in cyclic AMP concentration, inhibition of protein kinase A (PKA)-dependent phosphorylation of specific subunits of the mitochondrial electron transport system, including NDUFS2. In the hypothalamus, inhibits leptin-induced reactive oxygen species (ROS) formation and mediates cannabinoid-induced increase in SREBF1 and FASN gene expression. In response to cannabinoids, drives the release of orexigenic beta-endorphin, but not that of melanocyte-stimulating hormone alpha/alpha-MSH, from hypothalamic POMC neurons, hence promoting food intake. In the hippocampus, regulates cellular respiration and energy production in response to cannabinoids. Involved in cannabinoid-dependent depolarization-induced suppression of inhibition (DSI), a process in which depolarization of CA1 postsynaptic pyramidal neurons mobilizes eCBs, which retrogradely activate presynaptic CB1 receptors, transiently decreasing GABAergic inhibitory neurotransmission. Also reduces excitatory synaptic transmission (By similarity). In superior cervical ganglions and cerebral vascular smooth muscle cells, inhibits voltage-gated Ca(2+) channels in a constitutive, as well as agonist-dependent manner (By similarity). Induces leptin production in adipocytes and reduces LRP2-mediated leptin clearance in the kidney, hence participating in hyperleptinemia. In adipose tissue, CNR1 signaling leads to increased expression of SREBF1, ACACA and FASN genes. In the liver, activation by cannabinoids leads to increased de novo lipogenesis and reduced fatty acid catabolism, associated with increased expression of SREBF1/SREBP-1, GCK, ACACA, ACACB and FASN genes. May also affect de novo cholesterol synthesis and HDL-cholesteryl ether uptake. Peripherally modulates energy metabolism. In high carbohydrate diet-induced obesity, may decrease the expression of mitochondrial dihydrolipoyl dehydrogenase/DLD in striated muscles, as well as that of selected glucose/ pyruvate metabolic enzymes, hence affecting energy expenditure through mitochondrial metabolism. In response to cannabinoid anandamide, elicits a pro-inflammatory response in macrophages, which involves NLRP3 inflammasome activation and IL1B and IL18 secretion (By similarity).</text>
</comment>
<comment type="activity regulation">
    <text evidence="3">Hemopressin, a peptide derived from hemoglobin subunit alpha (HBA1 and/or HBA2), acts as an antagonist peptide: hemopressin-binding efficiently blocks cannabinoid receptor CNR1 and subsequent signaling.</text>
</comment>
<comment type="subunit">
    <text evidence="3">Interacts (via C-terminus) with CNRIP1; this interaction attenuates constitutive, but not agonist-dependent, inhibition of voltage-gated Ca(2+) channels in neurons (By similarity). Associates with G protein alpha subunits, including G(i) alpha-1/GNAI1, G(i) alpha-3/GNAI3 and G(o)-alpha/GNAO1; palmitoylation is important for interaction with GNAI3 and GNAO1 (By similarity).</text>
</comment>
<comment type="subcellular location">
    <subcellularLocation>
        <location evidence="4">Cell membrane</location>
        <topology evidence="3">Multi-pass membrane protein</topology>
    </subcellularLocation>
    <subcellularLocation>
        <location evidence="4">Mitochondrion outer membrane</location>
    </subcellularLocation>
    <subcellularLocation>
        <location evidence="2">Cell projection</location>
        <location evidence="2">Axon</location>
    </subcellularLocation>
    <subcellularLocation>
        <location evidence="2">Presynapse</location>
    </subcellularLocation>
    <text evidence="2 4">Unexpectedly, in the mitochondria, the C-terminus is located in the mitochondrial intermembrane space, a compartment topologically considered as extracellular. In canonical seven-transmembrane G-protein coupled receptors, the C-terminus is cytosolic (By similarity). Found on presynaptic axon terminals in some GABAergic neurons in the somatosensory cortex (By similarity).</text>
</comment>
<comment type="PTM">
    <text evidence="3">Palmitoylation at Cys-415 is important for recruitment at both plasma membrane and lipid rafts and association with G protein alpha subunits.</text>
</comment>
<comment type="similarity">
    <text evidence="6">Belongs to the G-protein coupled receptor 1 family.</text>
</comment>
<name>CNR1_PANTR</name>